<reference evidence="8" key="1">
    <citation type="journal article" date="2003" name="Development">
        <title>fear of intimacy encodes a novel transmembrane protein required for gonad morphogenesis in Drosophila.</title>
        <authorList>
            <person name="Van Doren M."/>
            <person name="Mathews W.R."/>
            <person name="Samuels M."/>
            <person name="Moore L.A."/>
            <person name="Broihier H.T."/>
            <person name="Lehmann R."/>
        </authorList>
    </citation>
    <scope>NUCLEOTIDE SEQUENCE [GENOMIC DNA]</scope>
    <scope>FUNCTION</scope>
    <scope>SUBCELLULAR LOCATION</scope>
    <scope>TISSUE SPECIFICITY</scope>
</reference>
<reference evidence="8" key="2">
    <citation type="journal article" date="2004" name="Dev. Biol.">
        <title>The Drosophila transmembrane protein Fear-of-intimacy controls glial cell migration.</title>
        <authorList>
            <person name="Pielage J."/>
            <person name="Kippert A."/>
            <person name="Zhu M."/>
            <person name="Klambt C."/>
        </authorList>
    </citation>
    <scope>PARTIAL NUCLEOTIDE SEQUENCE</scope>
    <scope>FUNCTION</scope>
    <scope>SUBCELLULAR LOCATION</scope>
    <scope>DEVELOPMENTAL STAGE</scope>
</reference>
<reference evidence="8 9" key="3">
    <citation type="journal article" date="2000" name="Science">
        <title>The genome sequence of Drosophila melanogaster.</title>
        <authorList>
            <person name="Adams M.D."/>
            <person name="Celniker S.E."/>
            <person name="Holt R.A."/>
            <person name="Evans C.A."/>
            <person name="Gocayne J.D."/>
            <person name="Amanatides P.G."/>
            <person name="Scherer S.E."/>
            <person name="Li P.W."/>
            <person name="Hoskins R.A."/>
            <person name="Galle R.F."/>
            <person name="George R.A."/>
            <person name="Lewis S.E."/>
            <person name="Richards S."/>
            <person name="Ashburner M."/>
            <person name="Henderson S.N."/>
            <person name="Sutton G.G."/>
            <person name="Wortman J.R."/>
            <person name="Yandell M.D."/>
            <person name="Zhang Q."/>
            <person name="Chen L.X."/>
            <person name="Brandon R.C."/>
            <person name="Rogers Y.-H.C."/>
            <person name="Blazej R.G."/>
            <person name="Champe M."/>
            <person name="Pfeiffer B.D."/>
            <person name="Wan K.H."/>
            <person name="Doyle C."/>
            <person name="Baxter E.G."/>
            <person name="Helt G."/>
            <person name="Nelson C.R."/>
            <person name="Miklos G.L.G."/>
            <person name="Abril J.F."/>
            <person name="Agbayani A."/>
            <person name="An H.-J."/>
            <person name="Andrews-Pfannkoch C."/>
            <person name="Baldwin D."/>
            <person name="Ballew R.M."/>
            <person name="Basu A."/>
            <person name="Baxendale J."/>
            <person name="Bayraktaroglu L."/>
            <person name="Beasley E.M."/>
            <person name="Beeson K.Y."/>
            <person name="Benos P.V."/>
            <person name="Berman B.P."/>
            <person name="Bhandari D."/>
            <person name="Bolshakov S."/>
            <person name="Borkova D."/>
            <person name="Botchan M.R."/>
            <person name="Bouck J."/>
            <person name="Brokstein P."/>
            <person name="Brottier P."/>
            <person name="Burtis K.C."/>
            <person name="Busam D.A."/>
            <person name="Butler H."/>
            <person name="Cadieu E."/>
            <person name="Center A."/>
            <person name="Chandra I."/>
            <person name="Cherry J.M."/>
            <person name="Cawley S."/>
            <person name="Dahlke C."/>
            <person name="Davenport L.B."/>
            <person name="Davies P."/>
            <person name="de Pablos B."/>
            <person name="Delcher A."/>
            <person name="Deng Z."/>
            <person name="Mays A.D."/>
            <person name="Dew I."/>
            <person name="Dietz S.M."/>
            <person name="Dodson K."/>
            <person name="Doup L.E."/>
            <person name="Downes M."/>
            <person name="Dugan-Rocha S."/>
            <person name="Dunkov B.C."/>
            <person name="Dunn P."/>
            <person name="Durbin K.J."/>
            <person name="Evangelista C.C."/>
            <person name="Ferraz C."/>
            <person name="Ferriera S."/>
            <person name="Fleischmann W."/>
            <person name="Fosler C."/>
            <person name="Gabrielian A.E."/>
            <person name="Garg N.S."/>
            <person name="Gelbart W.M."/>
            <person name="Glasser K."/>
            <person name="Glodek A."/>
            <person name="Gong F."/>
            <person name="Gorrell J.H."/>
            <person name="Gu Z."/>
            <person name="Guan P."/>
            <person name="Harris M."/>
            <person name="Harris N.L."/>
            <person name="Harvey D.A."/>
            <person name="Heiman T.J."/>
            <person name="Hernandez J.R."/>
            <person name="Houck J."/>
            <person name="Hostin D."/>
            <person name="Houston K.A."/>
            <person name="Howland T.J."/>
            <person name="Wei M.-H."/>
            <person name="Ibegwam C."/>
            <person name="Jalali M."/>
            <person name="Kalush F."/>
            <person name="Karpen G.H."/>
            <person name="Ke Z."/>
            <person name="Kennison J.A."/>
            <person name="Ketchum K.A."/>
            <person name="Kimmel B.E."/>
            <person name="Kodira C.D."/>
            <person name="Kraft C.L."/>
            <person name="Kravitz S."/>
            <person name="Kulp D."/>
            <person name="Lai Z."/>
            <person name="Lasko P."/>
            <person name="Lei Y."/>
            <person name="Levitsky A.A."/>
            <person name="Li J.H."/>
            <person name="Li Z."/>
            <person name="Liang Y."/>
            <person name="Lin X."/>
            <person name="Liu X."/>
            <person name="Mattei B."/>
            <person name="McIntosh T.C."/>
            <person name="McLeod M.P."/>
            <person name="McPherson D."/>
            <person name="Merkulov G."/>
            <person name="Milshina N.V."/>
            <person name="Mobarry C."/>
            <person name="Morris J."/>
            <person name="Moshrefi A."/>
            <person name="Mount S.M."/>
            <person name="Moy M."/>
            <person name="Murphy B."/>
            <person name="Murphy L."/>
            <person name="Muzny D.M."/>
            <person name="Nelson D.L."/>
            <person name="Nelson D.R."/>
            <person name="Nelson K.A."/>
            <person name="Nixon K."/>
            <person name="Nusskern D.R."/>
            <person name="Pacleb J.M."/>
            <person name="Palazzolo M."/>
            <person name="Pittman G.S."/>
            <person name="Pan S."/>
            <person name="Pollard J."/>
            <person name="Puri V."/>
            <person name="Reese M.G."/>
            <person name="Reinert K."/>
            <person name="Remington K."/>
            <person name="Saunders R.D.C."/>
            <person name="Scheeler F."/>
            <person name="Shen H."/>
            <person name="Shue B.C."/>
            <person name="Siden-Kiamos I."/>
            <person name="Simpson M."/>
            <person name="Skupski M.P."/>
            <person name="Smith T.J."/>
            <person name="Spier E."/>
            <person name="Spradling A.C."/>
            <person name="Stapleton M."/>
            <person name="Strong R."/>
            <person name="Sun E."/>
            <person name="Svirskas R."/>
            <person name="Tector C."/>
            <person name="Turner R."/>
            <person name="Venter E."/>
            <person name="Wang A.H."/>
            <person name="Wang X."/>
            <person name="Wang Z.-Y."/>
            <person name="Wassarman D.A."/>
            <person name="Weinstock G.M."/>
            <person name="Weissenbach J."/>
            <person name="Williams S.M."/>
            <person name="Woodage T."/>
            <person name="Worley K.C."/>
            <person name="Wu D."/>
            <person name="Yang S."/>
            <person name="Yao Q.A."/>
            <person name="Ye J."/>
            <person name="Yeh R.-F."/>
            <person name="Zaveri J.S."/>
            <person name="Zhan M."/>
            <person name="Zhang G."/>
            <person name="Zhao Q."/>
            <person name="Zheng L."/>
            <person name="Zheng X.H."/>
            <person name="Zhong F.N."/>
            <person name="Zhong W."/>
            <person name="Zhou X."/>
            <person name="Zhu S.C."/>
            <person name="Zhu X."/>
            <person name="Smith H.O."/>
            <person name="Gibbs R.A."/>
            <person name="Myers E.W."/>
            <person name="Rubin G.M."/>
            <person name="Venter J.C."/>
        </authorList>
    </citation>
    <scope>NUCLEOTIDE SEQUENCE [LARGE SCALE GENOMIC DNA]</scope>
    <source>
        <strain evidence="3">Berkeley</strain>
    </source>
</reference>
<reference evidence="8 9" key="4">
    <citation type="journal article" date="2002" name="Genome Biol.">
        <title>Annotation of the Drosophila melanogaster euchromatic genome: a systematic review.</title>
        <authorList>
            <person name="Misra S."/>
            <person name="Crosby M.A."/>
            <person name="Mungall C.J."/>
            <person name="Matthews B.B."/>
            <person name="Campbell K.S."/>
            <person name="Hradecky P."/>
            <person name="Huang Y."/>
            <person name="Kaminker J.S."/>
            <person name="Millburn G.H."/>
            <person name="Prochnik S.E."/>
            <person name="Smith C.D."/>
            <person name="Tupy J.L."/>
            <person name="Whitfield E.J."/>
            <person name="Bayraktaroglu L."/>
            <person name="Berman B.P."/>
            <person name="Bettencourt B.R."/>
            <person name="Celniker S.E."/>
            <person name="de Grey A.D.N.J."/>
            <person name="Drysdale R.A."/>
            <person name="Harris N.L."/>
            <person name="Richter J."/>
            <person name="Russo S."/>
            <person name="Schroeder A.J."/>
            <person name="Shu S.Q."/>
            <person name="Stapleton M."/>
            <person name="Yamada C."/>
            <person name="Ashburner M."/>
            <person name="Gelbart W.M."/>
            <person name="Rubin G.M."/>
            <person name="Lewis S.E."/>
        </authorList>
    </citation>
    <scope>GENOME REANNOTATION</scope>
    <source>
        <strain>Berkeley</strain>
    </source>
</reference>
<reference evidence="8" key="5">
    <citation type="journal article" date="2005" name="J. Biol. Chem.">
        <title>Drosophila fear of intimacy encodes a Zrt/IRT-like protein (ZIP) family zinc transporter functionally related to mammalian ZIP proteins.</title>
        <authorList>
            <person name="Mathews W.R."/>
            <person name="Wang F."/>
            <person name="Eide D.J."/>
            <person name="Van Doren M."/>
        </authorList>
    </citation>
    <scope>FUNCTION</scope>
    <scope>SUBCELLULAR LOCATION</scope>
    <scope>GLYCOSYLATION</scope>
    <scope>MUTAGENESIS OF ASP-308; HIS-554; GLU-584; GLU-588; ASP-591 AND TYR-646</scope>
</reference>
<reference key="6">
    <citation type="journal article" date="2008" name="J. Proteome Res.">
        <title>Phosphoproteome analysis of Drosophila melanogaster embryos.</title>
        <authorList>
            <person name="Zhai B."/>
            <person name="Villen J."/>
            <person name="Beausoleil S.A."/>
            <person name="Mintseris J."/>
            <person name="Gygi S.P."/>
        </authorList>
    </citation>
    <scope>PHOSPHORYLATION [LARGE SCALE ANALYSIS] AT SER-376; SER-377 AND SER-381</scope>
    <scope>IDENTIFICATION BY MASS SPECTROMETRY</scope>
    <source>
        <tissue>Embryo</tissue>
    </source>
</reference>
<proteinExistence type="evidence at protein level"/>
<name>FOI_DROME</name>
<protein>
    <recommendedName>
        <fullName>Zinc transporter foi</fullName>
    </recommendedName>
    <alternativeName>
        <fullName>Protein fear-of-intimacy</fullName>
    </alternativeName>
    <alternativeName>
        <fullName>Protein kastchen</fullName>
    </alternativeName>
</protein>
<evidence type="ECO:0000255" key="1"/>
<evidence type="ECO:0000256" key="2">
    <source>
        <dbReference type="SAM" id="MobiDB-lite"/>
    </source>
</evidence>
<evidence type="ECO:0000269" key="3">
    <source>
    </source>
</evidence>
<evidence type="ECO:0000269" key="4">
    <source>
    </source>
</evidence>
<evidence type="ECO:0000269" key="5">
    <source>
    </source>
</evidence>
<evidence type="ECO:0000269" key="6">
    <source>
    </source>
</evidence>
<evidence type="ECO:0000269" key="7">
    <source>
    </source>
</evidence>
<evidence type="ECO:0000305" key="8"/>
<evidence type="ECO:0000312" key="9">
    <source>
        <dbReference type="EMBL" id="AAF50401.3"/>
    </source>
</evidence>
<dbReference type="EMBL" id="AE014296">
    <property type="protein sequence ID" value="AAF50401.3"/>
    <property type="molecule type" value="Genomic_DNA"/>
</dbReference>
<dbReference type="RefSeq" id="NP_001261584.1">
    <property type="nucleotide sequence ID" value="NM_001274655.1"/>
</dbReference>
<dbReference type="RefSeq" id="NP_001261585.1">
    <property type="nucleotide sequence ID" value="NM_001274656.1"/>
</dbReference>
<dbReference type="RefSeq" id="NP_001286985.1">
    <property type="nucleotide sequence ID" value="NM_001300056.1"/>
</dbReference>
<dbReference type="RefSeq" id="NP_523974.3">
    <property type="nucleotide sequence ID" value="NM_079250.2"/>
</dbReference>
<dbReference type="BioGRID" id="64386">
    <property type="interactions" value="12"/>
</dbReference>
<dbReference type="FunCoup" id="Q9VSL7">
    <property type="interactions" value="866"/>
</dbReference>
<dbReference type="IntAct" id="Q9VSL7">
    <property type="interactions" value="1"/>
</dbReference>
<dbReference type="STRING" id="7227.FBpp0311670"/>
<dbReference type="TCDB" id="2.A.5.4.16">
    <property type="family name" value="the zinc (zn(2+))-iron (fe(2+)) permease (zip) family"/>
</dbReference>
<dbReference type="GlyCosmos" id="Q9VSL7">
    <property type="glycosylation" value="6 sites, No reported glycans"/>
</dbReference>
<dbReference type="GlyGen" id="Q9VSL7">
    <property type="glycosylation" value="6 sites"/>
</dbReference>
<dbReference type="iPTMnet" id="Q9VSL7"/>
<dbReference type="PaxDb" id="7227-FBpp0076350"/>
<dbReference type="EnsemblMetazoa" id="FBtr0076624">
    <property type="protein sequence ID" value="FBpp0076350"/>
    <property type="gene ID" value="FBgn0024236"/>
</dbReference>
<dbReference type="EnsemblMetazoa" id="FBtr0331417">
    <property type="protein sequence ID" value="FBpp0303834"/>
    <property type="gene ID" value="FBgn0024236"/>
</dbReference>
<dbReference type="EnsemblMetazoa" id="FBtr0331418">
    <property type="protein sequence ID" value="FBpp0303835"/>
    <property type="gene ID" value="FBgn0024236"/>
</dbReference>
<dbReference type="EnsemblMetazoa" id="FBtr0345601">
    <property type="protein sequence ID" value="FBpp0311670"/>
    <property type="gene ID" value="FBgn0024236"/>
</dbReference>
<dbReference type="GeneID" id="38976"/>
<dbReference type="KEGG" id="dme:Dmel_CG6817"/>
<dbReference type="AGR" id="FB:FBgn0024236"/>
<dbReference type="CTD" id="38976"/>
<dbReference type="FlyBase" id="FBgn0024236">
    <property type="gene designation" value="foi"/>
</dbReference>
<dbReference type="VEuPathDB" id="VectorBase:FBgn0024236"/>
<dbReference type="eggNOG" id="KOG2693">
    <property type="taxonomic scope" value="Eukaryota"/>
</dbReference>
<dbReference type="GeneTree" id="ENSGT00940000169482"/>
<dbReference type="HOGENOM" id="CLU_015114_13_1_1"/>
<dbReference type="InParanoid" id="Q9VSL7"/>
<dbReference type="OMA" id="LLMSHGM"/>
<dbReference type="OrthoDB" id="10265193at2759"/>
<dbReference type="PhylomeDB" id="Q9VSL7"/>
<dbReference type="Reactome" id="R-DME-442380">
    <property type="pathway name" value="Zinc influx into cells by the SLC39 gene family"/>
</dbReference>
<dbReference type="BioGRID-ORCS" id="38976">
    <property type="hits" value="1 hit in 3 CRISPR screens"/>
</dbReference>
<dbReference type="ChiTaRS" id="foi">
    <property type="organism name" value="fly"/>
</dbReference>
<dbReference type="GenomeRNAi" id="38976"/>
<dbReference type="PRO" id="PR:Q9VSL7"/>
<dbReference type="Proteomes" id="UP000000803">
    <property type="component" value="Chromosome 3L"/>
</dbReference>
<dbReference type="Bgee" id="FBgn0024236">
    <property type="expression patterns" value="Expressed in mechanosensory neuron of leg chordotonal organ in insect leg and 152 other cell types or tissues"/>
</dbReference>
<dbReference type="ExpressionAtlas" id="Q9VSL7">
    <property type="expression patterns" value="baseline and differential"/>
</dbReference>
<dbReference type="GO" id="GO:0016323">
    <property type="term" value="C:basolateral plasma membrane"/>
    <property type="evidence" value="ECO:0000314"/>
    <property type="project" value="FlyBase"/>
</dbReference>
<dbReference type="GO" id="GO:0009986">
    <property type="term" value="C:cell surface"/>
    <property type="evidence" value="ECO:0000314"/>
    <property type="project" value="FlyBase"/>
</dbReference>
<dbReference type="GO" id="GO:0005886">
    <property type="term" value="C:plasma membrane"/>
    <property type="evidence" value="ECO:0000314"/>
    <property type="project" value="UniProtKB"/>
</dbReference>
<dbReference type="GO" id="GO:0140410">
    <property type="term" value="F:monoatomic cation:bicarbonate symporter activity"/>
    <property type="evidence" value="ECO:0000318"/>
    <property type="project" value="GO_Central"/>
</dbReference>
<dbReference type="GO" id="GO:0005385">
    <property type="term" value="F:zinc ion transmembrane transporter activity"/>
    <property type="evidence" value="ECO:0000314"/>
    <property type="project" value="FlyBase"/>
</dbReference>
<dbReference type="GO" id="GO:0035147">
    <property type="term" value="P:branch fusion, open tracheal system"/>
    <property type="evidence" value="ECO:0000315"/>
    <property type="project" value="FlyBase"/>
</dbReference>
<dbReference type="GO" id="GO:0030154">
    <property type="term" value="P:cell differentiation"/>
    <property type="evidence" value="ECO:0007669"/>
    <property type="project" value="UniProtKB-KW"/>
</dbReference>
<dbReference type="GO" id="GO:0016477">
    <property type="term" value="P:cell migration"/>
    <property type="evidence" value="ECO:0000315"/>
    <property type="project" value="UniProtKB"/>
</dbReference>
<dbReference type="GO" id="GO:0007417">
    <property type="term" value="P:central nervous system development"/>
    <property type="evidence" value="ECO:0000315"/>
    <property type="project" value="FlyBase"/>
</dbReference>
<dbReference type="GO" id="GO:0008354">
    <property type="term" value="P:germ cell migration"/>
    <property type="evidence" value="ECO:0000315"/>
    <property type="project" value="FlyBase"/>
</dbReference>
<dbReference type="GO" id="GO:0008406">
    <property type="term" value="P:gonad development"/>
    <property type="evidence" value="ECO:0000304"/>
    <property type="project" value="FlyBase"/>
</dbReference>
<dbReference type="GO" id="GO:0035262">
    <property type="term" value="P:gonad morphogenesis"/>
    <property type="evidence" value="ECO:0000315"/>
    <property type="project" value="FlyBase"/>
</dbReference>
<dbReference type="GO" id="GO:0007506">
    <property type="term" value="P:gonadal mesoderm development"/>
    <property type="evidence" value="ECO:0000315"/>
    <property type="project" value="FlyBase"/>
</dbReference>
<dbReference type="GO" id="GO:0030003">
    <property type="term" value="P:intracellular monoatomic cation homeostasis"/>
    <property type="evidence" value="ECO:0000318"/>
    <property type="project" value="GO_Central"/>
</dbReference>
<dbReference type="GO" id="GO:0006882">
    <property type="term" value="P:intracellular zinc ion homeostasis"/>
    <property type="evidence" value="ECO:0000315"/>
    <property type="project" value="FlyBase"/>
</dbReference>
<dbReference type="GO" id="GO:0071578">
    <property type="term" value="P:zinc ion import across plasma membrane"/>
    <property type="evidence" value="ECO:0000318"/>
    <property type="project" value="GO_Central"/>
</dbReference>
<dbReference type="GO" id="GO:0071577">
    <property type="term" value="P:zinc ion transmembrane transport"/>
    <property type="evidence" value="ECO:0000315"/>
    <property type="project" value="FlyBase"/>
</dbReference>
<dbReference type="GO" id="GO:0006829">
    <property type="term" value="P:zinc ion transport"/>
    <property type="evidence" value="ECO:0000315"/>
    <property type="project" value="UniProtKB"/>
</dbReference>
<dbReference type="InterPro" id="IPR003689">
    <property type="entry name" value="ZIP"/>
</dbReference>
<dbReference type="InterPro" id="IPR050799">
    <property type="entry name" value="ZIP_Transporter"/>
</dbReference>
<dbReference type="PANTHER" id="PTHR12191">
    <property type="entry name" value="SOLUTE CARRIER FAMILY 39"/>
    <property type="match status" value="1"/>
</dbReference>
<dbReference type="PANTHER" id="PTHR12191:SF37">
    <property type="entry name" value="ZINC TRANSPORTER FOI"/>
    <property type="match status" value="1"/>
</dbReference>
<dbReference type="Pfam" id="PF02535">
    <property type="entry name" value="Zip"/>
    <property type="match status" value="2"/>
</dbReference>
<comment type="function">
    <text evidence="4 5 6">Required for the normal migration of longitudinal and peripheral glial cells. During larval development, required for the migration of the subretinal glia into the eye disk. During embryonic development, also controls the migration of muscle cells toward their attachment sites. Required in the mesoderm for the correct morphogenesis of embryonic gonad and for tracheal branch fusion during tracheal development. Shg may be cooperating with foi to mediate a common mechanism for gonad and tracheal morphogenesis. Acts as a zinc transporter in both yeast and mammalian cells.</text>
</comment>
<comment type="subcellular location">
    <subcellularLocation>
        <location evidence="4 5 6">Cell membrane</location>
        <topology evidence="4 5 6">Multi-pass membrane protein</topology>
    </subcellularLocation>
</comment>
<comment type="tissue specificity">
    <text evidence="4">Maternal foi has almost completely disappeared by embryonic stage 3 except in the pole cells. In stage 6 embryos, expression is enriched in the invaginating mesoderm. In stage 9 embryos, high levels in the anterior and posterior midgut primordia. In stage 14 embryos, broad expression with low levels in the epidermis.</text>
</comment>
<comment type="developmental stage">
    <text evidence="5">Expressed both maternally and zygotically.</text>
</comment>
<comment type="PTM">
    <text evidence="6">Glycosylated.</text>
</comment>
<comment type="similarity">
    <text evidence="6">Belongs to the ZIP transporter (TC 2.A.5) family.</text>
</comment>
<sequence>MARHIMAVCVVCLLCAHRLHCQDHIESLLGPARVTTHNSQDQLNARVYTNLSPSSETTDRRQQRSASGDDDTFNYSISPPSRREKRHAGHEHGPTSESRVPQITQYYLEKLMAQDELMNSSGFDGLLQQLSLHSLASGASEGTCVPGSRLVHHVQPHDHHHAHHHEEEDHSLQLNNCTLIQNGTTSNVICPSLPNNNTHPLGKEAKNFTLSDKDLLHLCPILLYELKAQSGGCIEPAILSDIDTTEELLEAEKDKDIFYVWIYAFISVFACGILGLVGVAIIPFMGSRYYKYIIQYLVALAVGTMTGDALLHLLPHSLAGQDERGMIMKGLGCLGGIIFFYVMEHALTMISEWRKSVEKKETKKPSRAKVMRDPDSSVNNSVAGDKICKQKYSSYPYCYDEITMNNKQSEWMHLPFDVAAGAGGDAPSVAELRNGVGDHDGSNDMAAAAESLISPLHTNCVEMNHHNHNHKHNSHQQNHEGQDSNTIVTDLDGNAVYAVNKAKDKDSRNDHVTVILREHESSHHGHSHRHGHVHSPPETLSAVAWMIIMGDGLHNFTDGMAIGAAFAENIAGGFSTSLAVFCHELPHELGDFAILIKAGMSVKSAVYYNLLTGVLSFIGMIFGIAFGQSQDVAQWMFAVAAGLFIYIALVDMMPEISASHKSLGQFLLQILGMLSGVGIMLLIALYEGDLMSAFGTAGAASHQHAH</sequence>
<accession>Q9VSL7</accession>
<keyword id="KW-1003">Cell membrane</keyword>
<keyword id="KW-0217">Developmental protein</keyword>
<keyword id="KW-0221">Differentiation</keyword>
<keyword id="KW-0325">Glycoprotein</keyword>
<keyword id="KW-0406">Ion transport</keyword>
<keyword id="KW-0472">Membrane</keyword>
<keyword id="KW-0524">Neurogenesis</keyword>
<keyword id="KW-0597">Phosphoprotein</keyword>
<keyword id="KW-1185">Reference proteome</keyword>
<keyword id="KW-0732">Signal</keyword>
<keyword id="KW-0812">Transmembrane</keyword>
<keyword id="KW-1133">Transmembrane helix</keyword>
<keyword id="KW-0813">Transport</keyword>
<keyword id="KW-0862">Zinc</keyword>
<keyword id="KW-0864">Zinc transport</keyword>
<gene>
    <name evidence="9" type="primary">foi</name>
    <name type="ORF">CG6817</name>
</gene>
<organism>
    <name type="scientific">Drosophila melanogaster</name>
    <name type="common">Fruit fly</name>
    <dbReference type="NCBI Taxonomy" id="7227"/>
    <lineage>
        <taxon>Eukaryota</taxon>
        <taxon>Metazoa</taxon>
        <taxon>Ecdysozoa</taxon>
        <taxon>Arthropoda</taxon>
        <taxon>Hexapoda</taxon>
        <taxon>Insecta</taxon>
        <taxon>Pterygota</taxon>
        <taxon>Neoptera</taxon>
        <taxon>Endopterygota</taxon>
        <taxon>Diptera</taxon>
        <taxon>Brachycera</taxon>
        <taxon>Muscomorpha</taxon>
        <taxon>Ephydroidea</taxon>
        <taxon>Drosophilidae</taxon>
        <taxon>Drosophila</taxon>
        <taxon>Sophophora</taxon>
    </lineage>
</organism>
<feature type="signal peptide" evidence="1">
    <location>
        <begin position="1"/>
        <end position="21"/>
    </location>
</feature>
<feature type="chain" id="PRO_0000041653" description="Zinc transporter foi" evidence="1">
    <location>
        <begin position="22"/>
        <end position="706"/>
    </location>
</feature>
<feature type="topological domain" description="Extracellular" evidence="1">
    <location>
        <begin position="22"/>
        <end position="261"/>
    </location>
</feature>
<feature type="transmembrane region" description="Helical; Name=1" evidence="1">
    <location>
        <begin position="262"/>
        <end position="282"/>
    </location>
</feature>
<feature type="topological domain" description="Cytoplasmic" evidence="1">
    <location>
        <begin position="283"/>
        <end position="292"/>
    </location>
</feature>
<feature type="transmembrane region" description="Helical; Name=2" evidence="1">
    <location>
        <begin position="293"/>
        <end position="313"/>
    </location>
</feature>
<feature type="topological domain" description="Extracellular" evidence="1">
    <location>
        <begin position="314"/>
        <end position="329"/>
    </location>
</feature>
<feature type="transmembrane region" description="Helical; Name=3" evidence="1">
    <location>
        <begin position="330"/>
        <end position="350"/>
    </location>
</feature>
<feature type="topological domain" description="Cytoplasmic" evidence="1">
    <location>
        <begin position="351"/>
        <end position="604"/>
    </location>
</feature>
<feature type="transmembrane region" description="Helical; Name=4" evidence="1">
    <location>
        <begin position="605"/>
        <end position="625"/>
    </location>
</feature>
<feature type="topological domain" description="Extracellular" evidence="1">
    <location>
        <begin position="626"/>
        <end position="631"/>
    </location>
</feature>
<feature type="transmembrane region" description="Helical; Name=5" evidence="1">
    <location>
        <begin position="632"/>
        <end position="652"/>
    </location>
</feature>
<feature type="topological domain" description="Cytoplasmic" evidence="1">
    <location>
        <begin position="653"/>
        <end position="665"/>
    </location>
</feature>
<feature type="transmembrane region" description="Helical; Name=6" evidence="1">
    <location>
        <begin position="666"/>
        <end position="686"/>
    </location>
</feature>
<feature type="topological domain" description="Extracellular" evidence="1">
    <location>
        <begin position="687"/>
        <end position="706"/>
    </location>
</feature>
<feature type="region of interest" description="Disordered" evidence="2">
    <location>
        <begin position="40"/>
        <end position="101"/>
    </location>
</feature>
<feature type="compositionally biased region" description="Polar residues" evidence="2">
    <location>
        <begin position="40"/>
        <end position="56"/>
    </location>
</feature>
<feature type="modified residue" description="Phosphoserine" evidence="7">
    <location>
        <position position="376"/>
    </location>
</feature>
<feature type="modified residue" description="Phosphoserine" evidence="7">
    <location>
        <position position="377"/>
    </location>
</feature>
<feature type="modified residue" description="Phosphoserine" evidence="7">
    <location>
        <position position="381"/>
    </location>
</feature>
<feature type="glycosylation site" description="N-linked (GlcNAc...) asparagine" evidence="1">
    <location>
        <position position="74"/>
    </location>
</feature>
<feature type="glycosylation site" description="N-linked (GlcNAc...) asparagine" evidence="1">
    <location>
        <position position="119"/>
    </location>
</feature>
<feature type="glycosylation site" description="N-linked (GlcNAc...) asparagine" evidence="1">
    <location>
        <position position="176"/>
    </location>
</feature>
<feature type="glycosylation site" description="N-linked (GlcNAc...) asparagine" evidence="1">
    <location>
        <position position="182"/>
    </location>
</feature>
<feature type="glycosylation site" description="N-linked (GlcNAc...) asparagine" evidence="1">
    <location>
        <position position="196"/>
    </location>
</feature>
<feature type="glycosylation site" description="N-linked (GlcNAc...) asparagine" evidence="1">
    <location>
        <position position="207"/>
    </location>
</feature>
<feature type="mutagenesis site" description="4-fold reduction in zinc transport activity in yeast assay." evidence="6">
    <original>D</original>
    <variation>A</variation>
    <location>
        <position position="308"/>
    </location>
</feature>
<feature type="mutagenesis site" description="Severely reduced zinc transport activity in yeast assay." evidence="6">
    <original>H</original>
    <variation>A</variation>
    <location>
        <position position="554"/>
    </location>
</feature>
<feature type="mutagenesis site" description="2-fold reduction in zinc transport activity in yeast assay; when in association with A-588 and A-591." evidence="6">
    <original>E</original>
    <variation>A</variation>
    <location>
        <position position="584"/>
    </location>
</feature>
<feature type="mutagenesis site" description="2-fold reduction in zinc transport activity in yeast assay; when in association with A-584 and A-591." evidence="6">
    <original>E</original>
    <variation>A</variation>
    <location>
        <position position="588"/>
    </location>
</feature>
<feature type="mutagenesis site" description="2-fold reduction in zinc transport activity in yeast assay; when in association with A-584 and A-588." evidence="6">
    <original>D</original>
    <variation>A</variation>
    <location>
        <position position="591"/>
    </location>
</feature>
<feature type="mutagenesis site" description="2-fold reduction zinc transport activity in yeast assay." evidence="6">
    <original>Y</original>
    <variation>A</variation>
    <location>
        <position position="646"/>
    </location>
</feature>